<comment type="catalytic activity">
    <reaction evidence="1">
        <text>D-erythro-1-(imidazol-4-yl)glycerol 3-phosphate = 3-(imidazol-4-yl)-2-oxopropyl phosphate + H2O</text>
        <dbReference type="Rhea" id="RHEA:11040"/>
        <dbReference type="ChEBI" id="CHEBI:15377"/>
        <dbReference type="ChEBI" id="CHEBI:57766"/>
        <dbReference type="ChEBI" id="CHEBI:58278"/>
        <dbReference type="EC" id="4.2.1.19"/>
    </reaction>
</comment>
<comment type="pathway">
    <text evidence="1">Amino-acid biosynthesis; L-histidine biosynthesis; L-histidine from 5-phospho-alpha-D-ribose 1-diphosphate: step 6/9.</text>
</comment>
<comment type="subcellular location">
    <subcellularLocation>
        <location evidence="1">Cytoplasm</location>
    </subcellularLocation>
</comment>
<comment type="similarity">
    <text evidence="1">Belongs to the imidazoleglycerol-phosphate dehydratase family.</text>
</comment>
<name>HIS7_METHJ</name>
<feature type="chain" id="PRO_0000336364" description="Imidazoleglycerol-phosphate dehydratase">
    <location>
        <begin position="1"/>
        <end position="193"/>
    </location>
</feature>
<accession>Q2FN13</accession>
<reference key="1">
    <citation type="journal article" date="2016" name="Stand. Genomic Sci.">
        <title>Complete genome sequence of Methanospirillum hungatei type strain JF1.</title>
        <authorList>
            <person name="Gunsalus R.P."/>
            <person name="Cook L.E."/>
            <person name="Crable B."/>
            <person name="Rohlin L."/>
            <person name="McDonald E."/>
            <person name="Mouttaki H."/>
            <person name="Sieber J.R."/>
            <person name="Poweleit N."/>
            <person name="Zhou H."/>
            <person name="Lapidus A.L."/>
            <person name="Daligault H.E."/>
            <person name="Land M."/>
            <person name="Gilna P."/>
            <person name="Ivanova N."/>
            <person name="Kyrpides N."/>
            <person name="Culley D.E."/>
            <person name="McInerney M.J."/>
        </authorList>
    </citation>
    <scope>NUCLEOTIDE SEQUENCE [LARGE SCALE GENOMIC DNA]</scope>
    <source>
        <strain>ATCC 27890 / DSM 864 / NBRC 100397 / JF-1</strain>
    </source>
</reference>
<evidence type="ECO:0000255" key="1">
    <source>
        <dbReference type="HAMAP-Rule" id="MF_00076"/>
    </source>
</evidence>
<protein>
    <recommendedName>
        <fullName evidence="1">Imidazoleglycerol-phosphate dehydratase</fullName>
        <shortName evidence="1">IGPD</shortName>
        <ecNumber evidence="1">4.2.1.19</ecNumber>
    </recommendedName>
</protein>
<keyword id="KW-0028">Amino-acid biosynthesis</keyword>
<keyword id="KW-0963">Cytoplasm</keyword>
<keyword id="KW-0368">Histidine biosynthesis</keyword>
<keyword id="KW-0456">Lyase</keyword>
<keyword id="KW-1185">Reference proteome</keyword>
<gene>
    <name evidence="1" type="primary">hisB</name>
    <name type="ordered locus">Mhun_0920</name>
</gene>
<proteinExistence type="inferred from homology"/>
<dbReference type="EC" id="4.2.1.19" evidence="1"/>
<dbReference type="EMBL" id="CP000254">
    <property type="protein sequence ID" value="ABD40670.1"/>
    <property type="molecule type" value="Genomic_DNA"/>
</dbReference>
<dbReference type="RefSeq" id="WP_011447949.1">
    <property type="nucleotide sequence ID" value="NC_007796.1"/>
</dbReference>
<dbReference type="SMR" id="Q2FN13"/>
<dbReference type="FunCoup" id="Q2FN13">
    <property type="interactions" value="92"/>
</dbReference>
<dbReference type="STRING" id="323259.Mhun_0920"/>
<dbReference type="EnsemblBacteria" id="ABD40670">
    <property type="protein sequence ID" value="ABD40670"/>
    <property type="gene ID" value="Mhun_0920"/>
</dbReference>
<dbReference type="GeneID" id="3924607"/>
<dbReference type="KEGG" id="mhu:Mhun_0920"/>
<dbReference type="eggNOG" id="arCOG04398">
    <property type="taxonomic scope" value="Archaea"/>
</dbReference>
<dbReference type="HOGENOM" id="CLU_044308_3_0_2"/>
<dbReference type="InParanoid" id="Q2FN13"/>
<dbReference type="OrthoDB" id="103579at2157"/>
<dbReference type="UniPathway" id="UPA00031">
    <property type="reaction ID" value="UER00011"/>
</dbReference>
<dbReference type="Proteomes" id="UP000001941">
    <property type="component" value="Chromosome"/>
</dbReference>
<dbReference type="GO" id="GO:0005737">
    <property type="term" value="C:cytoplasm"/>
    <property type="evidence" value="ECO:0007669"/>
    <property type="project" value="UniProtKB-SubCell"/>
</dbReference>
<dbReference type="GO" id="GO:0004424">
    <property type="term" value="F:imidazoleglycerol-phosphate dehydratase activity"/>
    <property type="evidence" value="ECO:0007669"/>
    <property type="project" value="UniProtKB-UniRule"/>
</dbReference>
<dbReference type="GO" id="GO:0000105">
    <property type="term" value="P:L-histidine biosynthetic process"/>
    <property type="evidence" value="ECO:0007669"/>
    <property type="project" value="UniProtKB-UniRule"/>
</dbReference>
<dbReference type="CDD" id="cd07914">
    <property type="entry name" value="IGPD"/>
    <property type="match status" value="1"/>
</dbReference>
<dbReference type="FunFam" id="3.30.230.40:FF:000001">
    <property type="entry name" value="Imidazoleglycerol-phosphate dehydratase HisB"/>
    <property type="match status" value="1"/>
</dbReference>
<dbReference type="FunFam" id="3.30.230.40:FF:000003">
    <property type="entry name" value="Imidazoleglycerol-phosphate dehydratase HisB"/>
    <property type="match status" value="1"/>
</dbReference>
<dbReference type="Gene3D" id="3.30.230.40">
    <property type="entry name" value="Imidazole glycerol phosphate dehydratase, domain 1"/>
    <property type="match status" value="2"/>
</dbReference>
<dbReference type="HAMAP" id="MF_00076">
    <property type="entry name" value="HisB"/>
    <property type="match status" value="1"/>
</dbReference>
<dbReference type="InterPro" id="IPR038494">
    <property type="entry name" value="IGPD_sf"/>
</dbReference>
<dbReference type="InterPro" id="IPR000807">
    <property type="entry name" value="ImidazoleglycerolP_deHydtase"/>
</dbReference>
<dbReference type="InterPro" id="IPR020568">
    <property type="entry name" value="Ribosomal_Su5_D2-typ_SF"/>
</dbReference>
<dbReference type="NCBIfam" id="NF002111">
    <property type="entry name" value="PRK00951.2-1"/>
    <property type="match status" value="1"/>
</dbReference>
<dbReference type="NCBIfam" id="NF002114">
    <property type="entry name" value="PRK00951.2-4"/>
    <property type="match status" value="1"/>
</dbReference>
<dbReference type="PANTHER" id="PTHR23133:SF2">
    <property type="entry name" value="IMIDAZOLEGLYCEROL-PHOSPHATE DEHYDRATASE"/>
    <property type="match status" value="1"/>
</dbReference>
<dbReference type="PANTHER" id="PTHR23133">
    <property type="entry name" value="IMIDAZOLEGLYCEROL-PHOSPHATE DEHYDRATASE HIS7"/>
    <property type="match status" value="1"/>
</dbReference>
<dbReference type="Pfam" id="PF00475">
    <property type="entry name" value="IGPD"/>
    <property type="match status" value="1"/>
</dbReference>
<dbReference type="SUPFAM" id="SSF54211">
    <property type="entry name" value="Ribosomal protein S5 domain 2-like"/>
    <property type="match status" value="2"/>
</dbReference>
<organism>
    <name type="scientific">Methanospirillum hungatei JF-1 (strain ATCC 27890 / DSM 864 / NBRC 100397 / JF-1)</name>
    <dbReference type="NCBI Taxonomy" id="323259"/>
    <lineage>
        <taxon>Archaea</taxon>
        <taxon>Methanobacteriati</taxon>
        <taxon>Methanobacteriota</taxon>
        <taxon>Stenosarchaea group</taxon>
        <taxon>Methanomicrobia</taxon>
        <taxon>Methanomicrobiales</taxon>
        <taxon>Methanospirillaceae</taxon>
        <taxon>Methanospirillum</taxon>
    </lineage>
</organism>
<sequence length="193" mass="21241">MRTAEIKRKTKETDITVRFSLDGSGKGTIHTGIPFFDHMLDSFTRHSRFDLDIQAIGDLEKGPHHTIEDIGIVLGQVFTHALGEGRGIQRFASVIVPMDESKAEVALDVGGRPYLVFEGSFSGPVEGVIESWLVRHFFESFIQNAKVTAHMNVSGFSDHHKCEALFKAFGVALHSATKIVYDDGQVPSTKGVL</sequence>